<organism>
    <name type="scientific">Acinetobacter baylyi (strain ATCC 33305 / BD413 / ADP1)</name>
    <dbReference type="NCBI Taxonomy" id="62977"/>
    <lineage>
        <taxon>Bacteria</taxon>
        <taxon>Pseudomonadati</taxon>
        <taxon>Pseudomonadota</taxon>
        <taxon>Gammaproteobacteria</taxon>
        <taxon>Moraxellales</taxon>
        <taxon>Moraxellaceae</taxon>
        <taxon>Acinetobacter</taxon>
    </lineage>
</organism>
<dbReference type="EMBL" id="CR543861">
    <property type="protein sequence ID" value="CAG67200.1"/>
    <property type="molecule type" value="Genomic_DNA"/>
</dbReference>
<dbReference type="RefSeq" id="WP_004920776.1">
    <property type="nucleotide sequence ID" value="NC_005966.1"/>
</dbReference>
<dbReference type="SMR" id="Q6FFF7"/>
<dbReference type="STRING" id="202950.GCA_001485005_00509"/>
<dbReference type="GeneID" id="45232749"/>
<dbReference type="KEGG" id="aci:ACIAD0233"/>
<dbReference type="eggNOG" id="COG2814">
    <property type="taxonomic scope" value="Bacteria"/>
</dbReference>
<dbReference type="HOGENOM" id="CLU_001265_46_6_6"/>
<dbReference type="OrthoDB" id="4474610at2"/>
<dbReference type="BioCyc" id="ASP62977:ACIAD_RS01100-MONOMER"/>
<dbReference type="Proteomes" id="UP000000430">
    <property type="component" value="Chromosome"/>
</dbReference>
<dbReference type="GO" id="GO:0005886">
    <property type="term" value="C:plasma membrane"/>
    <property type="evidence" value="ECO:0007669"/>
    <property type="project" value="UniProtKB-SubCell"/>
</dbReference>
<dbReference type="GO" id="GO:0022857">
    <property type="term" value="F:transmembrane transporter activity"/>
    <property type="evidence" value="ECO:0007669"/>
    <property type="project" value="InterPro"/>
</dbReference>
<dbReference type="CDD" id="cd17316">
    <property type="entry name" value="MFS_SV2_like"/>
    <property type="match status" value="1"/>
</dbReference>
<dbReference type="Gene3D" id="1.20.1250.20">
    <property type="entry name" value="MFS general substrate transporter like domains"/>
    <property type="match status" value="1"/>
</dbReference>
<dbReference type="InterPro" id="IPR020846">
    <property type="entry name" value="MFS_dom"/>
</dbReference>
<dbReference type="InterPro" id="IPR005828">
    <property type="entry name" value="MFS_sugar_transport-like"/>
</dbReference>
<dbReference type="InterPro" id="IPR036259">
    <property type="entry name" value="MFS_trans_sf"/>
</dbReference>
<dbReference type="InterPro" id="IPR005829">
    <property type="entry name" value="Sugar_transporter_CS"/>
</dbReference>
<dbReference type="PANTHER" id="PTHR23511">
    <property type="entry name" value="SYNAPTIC VESICLE GLYCOPROTEIN 2"/>
    <property type="match status" value="1"/>
</dbReference>
<dbReference type="PANTHER" id="PTHR23511:SF34">
    <property type="entry name" value="SYNAPTIC VESICLE GLYCOPROTEIN 2"/>
    <property type="match status" value="1"/>
</dbReference>
<dbReference type="Pfam" id="PF00083">
    <property type="entry name" value="Sugar_tr"/>
    <property type="match status" value="1"/>
</dbReference>
<dbReference type="SUPFAM" id="SSF103473">
    <property type="entry name" value="MFS general substrate transporter"/>
    <property type="match status" value="1"/>
</dbReference>
<dbReference type="PROSITE" id="PS50850">
    <property type="entry name" value="MFS"/>
    <property type="match status" value="1"/>
</dbReference>
<dbReference type="PROSITE" id="PS00216">
    <property type="entry name" value="SUGAR_TRANSPORT_1"/>
    <property type="match status" value="2"/>
</dbReference>
<dbReference type="PROSITE" id="PS00217">
    <property type="entry name" value="SUGAR_TRANSPORT_2"/>
    <property type="match status" value="1"/>
</dbReference>
<sequence length="439" mass="48407">MDLVSRIENLPIGKFHYTLLWVVGLGWMFDALDTGIIAFIMTTLVKDWALTPAESGWIVSIGFIGMALGAVFSGGLADRFGRKTVFATTLLIYSLATAACAFAPNLTWLLAFRFIVGLGLGGQLPVAVTLVSEYIPAHVRGRFIVLLESFWGLGWLVAALVSYFVIPHFGWHIAFLIGGLPAIYVYVIIKKVPESIPYLINRGRIDEAHELVQQIERHAGVPVIDTIVVKPVAQKQQVSFRQLWSGRFARRSLMLWLVWFGIVFSYYGIFTWLPSLLVKQGYSVVQSFEYVLIMILAQLPGYISAAWLVERLGRKATLAGFIGACAISAYFFGQADTVFNIMVWGCLLSFFNLGAWGVLYTYTPEQYPANIRAFGAGWASAVGRMGGIAAPIVVTHMMVAHDGFHQVFMMFTLVLLAVAAVIVILGEETQGKTLESIGL</sequence>
<accession>Q6FFF7</accession>
<keyword id="KW-0997">Cell inner membrane</keyword>
<keyword id="KW-1003">Cell membrane</keyword>
<keyword id="KW-0472">Membrane</keyword>
<keyword id="KW-0812">Transmembrane</keyword>
<keyword id="KW-1133">Transmembrane helix</keyword>
<keyword id="KW-0813">Transport</keyword>
<proteinExistence type="evidence at protein level"/>
<protein>
    <recommendedName>
        <fullName evidence="3">Niacin transporter NiaP</fullName>
    </recommendedName>
</protein>
<name>NIAP_ACIAD</name>
<feature type="chain" id="PRO_0000457836" description="Niacin transporter NiaP">
    <location>
        <begin position="1"/>
        <end position="439"/>
    </location>
</feature>
<feature type="transmembrane region" description="Helical" evidence="1">
    <location>
        <begin position="20"/>
        <end position="40"/>
    </location>
</feature>
<feature type="transmembrane region" description="Helical" evidence="1">
    <location>
        <begin position="57"/>
        <end position="77"/>
    </location>
</feature>
<feature type="transmembrane region" description="Helical" evidence="1">
    <location>
        <begin position="84"/>
        <end position="104"/>
    </location>
</feature>
<feature type="transmembrane region" description="Helical" evidence="1">
    <location>
        <begin position="108"/>
        <end position="128"/>
    </location>
</feature>
<feature type="transmembrane region" description="Helical" evidence="1">
    <location>
        <begin position="143"/>
        <end position="163"/>
    </location>
</feature>
<feature type="transmembrane region" description="Helical" evidence="1">
    <location>
        <begin position="169"/>
        <end position="189"/>
    </location>
</feature>
<feature type="transmembrane region" description="Helical" evidence="1">
    <location>
        <begin position="253"/>
        <end position="273"/>
    </location>
</feature>
<feature type="transmembrane region" description="Helical" evidence="1">
    <location>
        <begin position="288"/>
        <end position="308"/>
    </location>
</feature>
<feature type="transmembrane region" description="Helical" evidence="1">
    <location>
        <begin position="316"/>
        <end position="336"/>
    </location>
</feature>
<feature type="transmembrane region" description="Helical" evidence="1">
    <location>
        <begin position="338"/>
        <end position="358"/>
    </location>
</feature>
<feature type="transmembrane region" description="Helical" evidence="1">
    <location>
        <begin position="374"/>
        <end position="394"/>
    </location>
</feature>
<feature type="transmembrane region" description="Helical" evidence="1">
    <location>
        <begin position="407"/>
        <end position="427"/>
    </location>
</feature>
<reference key="1">
    <citation type="journal article" date="2004" name="Nucleic Acids Res.">
        <title>Unique features revealed by the genome sequence of Acinetobacter sp. ADP1, a versatile and naturally transformation competent bacterium.</title>
        <authorList>
            <person name="Barbe V."/>
            <person name="Vallenet D."/>
            <person name="Fonknechten N."/>
            <person name="Kreimeyer A."/>
            <person name="Oztas S."/>
            <person name="Labarre L."/>
            <person name="Cruveiller S."/>
            <person name="Robert C."/>
            <person name="Duprat S."/>
            <person name="Wincker P."/>
            <person name="Ornston L.N."/>
            <person name="Weissenbach J."/>
            <person name="Marliere P."/>
            <person name="Cohen G.N."/>
            <person name="Medigue C."/>
        </authorList>
    </citation>
    <scope>NUCLEOTIDE SEQUENCE [LARGE SCALE GENOMIC DNA]</scope>
    <source>
        <strain>ATCC 33305 / BD413 / ADP1</strain>
    </source>
</reference>
<reference key="2">
    <citation type="journal article" date="2010" name="J. Biol. Chem.">
        <title>Genomics-driven reconstruction of acinetobacter NAD metabolism: insights for antibacterial target selection.</title>
        <authorList>
            <person name="Sorci L."/>
            <person name="Blaby I."/>
            <person name="De Ingeniis J."/>
            <person name="Gerdes S."/>
            <person name="Raffaelli N."/>
            <person name="de Crecy Lagard V."/>
            <person name="Osterman A."/>
        </authorList>
    </citation>
    <scope>FUNCTION IN NIACIN TRANSPORT</scope>
    <scope>DISRUPTION PHENOTYPE</scope>
    <source>
        <strain>ATCC 33305 / BD413 / ADP1</strain>
    </source>
</reference>
<comment type="function">
    <text evidence="2">Functions as a high-affinity transporter of niacin (nicotinamide or nicotinate) (PubMed:20926389). Probably substantially contributes to niacin transport when its concentration in the medium is very low (PubMed:20926389).</text>
</comment>
<comment type="subcellular location">
    <subcellularLocation>
        <location evidence="4">Cell inner membrane</location>
        <topology evidence="1">Multi-pass membrane protein</topology>
    </subcellularLocation>
</comment>
<comment type="disruption phenotype">
    <text evidence="2">When compared with a nadB mutant (with blocked de novo NAD biosynthesis route), the nadB-niaP double mutant requires at least a 200-fold higher niacin concentration for normal growth.</text>
</comment>
<comment type="similarity">
    <text evidence="4">Belongs to the major facilitator superfamily. Sugar transporter (TC 2.A.1.1) family.</text>
</comment>
<gene>
    <name evidence="3" type="primary">niaP</name>
    <name evidence="5" type="ordered locus">ACIAD0233</name>
</gene>
<evidence type="ECO:0000255" key="1"/>
<evidence type="ECO:0000269" key="2">
    <source>
    </source>
</evidence>
<evidence type="ECO:0000303" key="3">
    <source>
    </source>
</evidence>
<evidence type="ECO:0000305" key="4"/>
<evidence type="ECO:0000312" key="5">
    <source>
        <dbReference type="EMBL" id="CAG67200.1"/>
    </source>
</evidence>